<feature type="chain" id="PRO_0000381645" description="Biotin synthase">
    <location>
        <begin position="1"/>
        <end position="335"/>
    </location>
</feature>
<feature type="domain" description="Radical SAM core" evidence="2">
    <location>
        <begin position="43"/>
        <end position="269"/>
    </location>
</feature>
<feature type="binding site" evidence="1">
    <location>
        <position position="61"/>
    </location>
    <ligand>
        <name>[4Fe-4S] cluster</name>
        <dbReference type="ChEBI" id="CHEBI:49883"/>
        <note>4Fe-4S-S-AdoMet</note>
    </ligand>
</feature>
<feature type="binding site" evidence="1">
    <location>
        <position position="65"/>
    </location>
    <ligand>
        <name>[4Fe-4S] cluster</name>
        <dbReference type="ChEBI" id="CHEBI:49883"/>
        <note>4Fe-4S-S-AdoMet</note>
    </ligand>
</feature>
<feature type="binding site" evidence="1">
    <location>
        <position position="68"/>
    </location>
    <ligand>
        <name>[4Fe-4S] cluster</name>
        <dbReference type="ChEBI" id="CHEBI:49883"/>
        <note>4Fe-4S-S-AdoMet</note>
    </ligand>
</feature>
<feature type="binding site" evidence="1">
    <location>
        <position position="104"/>
    </location>
    <ligand>
        <name>[2Fe-2S] cluster</name>
        <dbReference type="ChEBI" id="CHEBI:190135"/>
    </ligand>
</feature>
<feature type="binding site" evidence="1">
    <location>
        <position position="137"/>
    </location>
    <ligand>
        <name>[2Fe-2S] cluster</name>
        <dbReference type="ChEBI" id="CHEBI:190135"/>
    </ligand>
</feature>
<feature type="binding site" evidence="1">
    <location>
        <position position="197"/>
    </location>
    <ligand>
        <name>[2Fe-2S] cluster</name>
        <dbReference type="ChEBI" id="CHEBI:190135"/>
    </ligand>
</feature>
<feature type="binding site" evidence="1">
    <location>
        <position position="267"/>
    </location>
    <ligand>
        <name>[2Fe-2S] cluster</name>
        <dbReference type="ChEBI" id="CHEBI:190135"/>
    </ligand>
</feature>
<dbReference type="EC" id="2.8.1.6" evidence="1"/>
<dbReference type="EMBL" id="CP000253">
    <property type="protein sequence ID" value="ABD31722.1"/>
    <property type="molecule type" value="Genomic_DNA"/>
</dbReference>
<dbReference type="RefSeq" id="WP_001046646.1">
    <property type="nucleotide sequence ID" value="NZ_LS483365.1"/>
</dbReference>
<dbReference type="RefSeq" id="YP_501176.1">
    <property type="nucleotide sequence ID" value="NC_007795.1"/>
</dbReference>
<dbReference type="SMR" id="Q2FVJ7"/>
<dbReference type="STRING" id="93061.SAOUHSC_02714"/>
<dbReference type="PaxDb" id="1280-SAXN108_2681"/>
<dbReference type="GeneID" id="3919733"/>
<dbReference type="KEGG" id="sao:SAOUHSC_02714"/>
<dbReference type="PATRIC" id="fig|93061.5.peg.2458"/>
<dbReference type="eggNOG" id="COG0502">
    <property type="taxonomic scope" value="Bacteria"/>
</dbReference>
<dbReference type="HOGENOM" id="CLU_033172_2_1_9"/>
<dbReference type="OrthoDB" id="9786826at2"/>
<dbReference type="UniPathway" id="UPA00078">
    <property type="reaction ID" value="UER00162"/>
</dbReference>
<dbReference type="PRO" id="PR:Q2FVJ7"/>
<dbReference type="Proteomes" id="UP000008816">
    <property type="component" value="Chromosome"/>
</dbReference>
<dbReference type="GO" id="GO:0051537">
    <property type="term" value="F:2 iron, 2 sulfur cluster binding"/>
    <property type="evidence" value="ECO:0000318"/>
    <property type="project" value="GO_Central"/>
</dbReference>
<dbReference type="GO" id="GO:0051539">
    <property type="term" value="F:4 iron, 4 sulfur cluster binding"/>
    <property type="evidence" value="ECO:0007669"/>
    <property type="project" value="UniProtKB-KW"/>
</dbReference>
<dbReference type="GO" id="GO:0004076">
    <property type="term" value="F:biotin synthase activity"/>
    <property type="evidence" value="ECO:0000318"/>
    <property type="project" value="GO_Central"/>
</dbReference>
<dbReference type="GO" id="GO:0005506">
    <property type="term" value="F:iron ion binding"/>
    <property type="evidence" value="ECO:0007669"/>
    <property type="project" value="UniProtKB-UniRule"/>
</dbReference>
<dbReference type="GO" id="GO:0009102">
    <property type="term" value="P:biotin biosynthetic process"/>
    <property type="evidence" value="ECO:0000318"/>
    <property type="project" value="GO_Central"/>
</dbReference>
<dbReference type="CDD" id="cd01335">
    <property type="entry name" value="Radical_SAM"/>
    <property type="match status" value="1"/>
</dbReference>
<dbReference type="FunFam" id="3.20.20.70:FF:000026">
    <property type="entry name" value="Biotin synthase"/>
    <property type="match status" value="1"/>
</dbReference>
<dbReference type="Gene3D" id="3.20.20.70">
    <property type="entry name" value="Aldolase class I"/>
    <property type="match status" value="1"/>
</dbReference>
<dbReference type="HAMAP" id="MF_01694">
    <property type="entry name" value="BioB"/>
    <property type="match status" value="1"/>
</dbReference>
<dbReference type="InterPro" id="IPR013785">
    <property type="entry name" value="Aldolase_TIM"/>
</dbReference>
<dbReference type="InterPro" id="IPR010722">
    <property type="entry name" value="BATS_dom"/>
</dbReference>
<dbReference type="InterPro" id="IPR002684">
    <property type="entry name" value="Biotin_synth/BioAB"/>
</dbReference>
<dbReference type="InterPro" id="IPR024177">
    <property type="entry name" value="Biotin_synthase"/>
</dbReference>
<dbReference type="InterPro" id="IPR006638">
    <property type="entry name" value="Elp3/MiaA/NifB-like_rSAM"/>
</dbReference>
<dbReference type="InterPro" id="IPR007197">
    <property type="entry name" value="rSAM"/>
</dbReference>
<dbReference type="NCBIfam" id="TIGR00433">
    <property type="entry name" value="bioB"/>
    <property type="match status" value="1"/>
</dbReference>
<dbReference type="PANTHER" id="PTHR22976">
    <property type="entry name" value="BIOTIN SYNTHASE"/>
    <property type="match status" value="1"/>
</dbReference>
<dbReference type="PANTHER" id="PTHR22976:SF2">
    <property type="entry name" value="BIOTIN SYNTHASE, MITOCHONDRIAL"/>
    <property type="match status" value="1"/>
</dbReference>
<dbReference type="Pfam" id="PF06968">
    <property type="entry name" value="BATS"/>
    <property type="match status" value="1"/>
</dbReference>
<dbReference type="Pfam" id="PF04055">
    <property type="entry name" value="Radical_SAM"/>
    <property type="match status" value="1"/>
</dbReference>
<dbReference type="PIRSF" id="PIRSF001619">
    <property type="entry name" value="Biotin_synth"/>
    <property type="match status" value="1"/>
</dbReference>
<dbReference type="SFLD" id="SFLDG01060">
    <property type="entry name" value="BATS_domain_containing"/>
    <property type="match status" value="1"/>
</dbReference>
<dbReference type="SFLD" id="SFLDG01278">
    <property type="entry name" value="biotin_synthase_like"/>
    <property type="match status" value="1"/>
</dbReference>
<dbReference type="SMART" id="SM00876">
    <property type="entry name" value="BATS"/>
    <property type="match status" value="1"/>
</dbReference>
<dbReference type="SMART" id="SM00729">
    <property type="entry name" value="Elp3"/>
    <property type="match status" value="1"/>
</dbReference>
<dbReference type="SUPFAM" id="SSF102114">
    <property type="entry name" value="Radical SAM enzymes"/>
    <property type="match status" value="1"/>
</dbReference>
<dbReference type="PROSITE" id="PS51918">
    <property type="entry name" value="RADICAL_SAM"/>
    <property type="match status" value="1"/>
</dbReference>
<proteinExistence type="inferred from homology"/>
<reference key="1">
    <citation type="book" date="2006" name="Gram positive pathogens, 2nd edition">
        <title>The Staphylococcus aureus NCTC 8325 genome.</title>
        <editorList>
            <person name="Fischetti V."/>
            <person name="Novick R."/>
            <person name="Ferretti J."/>
            <person name="Portnoy D."/>
            <person name="Rood J."/>
        </editorList>
        <authorList>
            <person name="Gillaspy A.F."/>
            <person name="Worrell V."/>
            <person name="Orvis J."/>
            <person name="Roe B.A."/>
            <person name="Dyer D.W."/>
            <person name="Iandolo J.J."/>
        </authorList>
    </citation>
    <scope>NUCLEOTIDE SEQUENCE [LARGE SCALE GENOMIC DNA]</scope>
    <source>
        <strain>NCTC 8325 / PS 47</strain>
    </source>
</reference>
<keyword id="KW-0001">2Fe-2S</keyword>
<keyword id="KW-0004">4Fe-4S</keyword>
<keyword id="KW-0093">Biotin biosynthesis</keyword>
<keyword id="KW-0408">Iron</keyword>
<keyword id="KW-0411">Iron-sulfur</keyword>
<keyword id="KW-0479">Metal-binding</keyword>
<keyword id="KW-1185">Reference proteome</keyword>
<keyword id="KW-0949">S-adenosyl-L-methionine</keyword>
<keyword id="KW-0808">Transferase</keyword>
<organism>
    <name type="scientific">Staphylococcus aureus (strain NCTC 8325 / PS 47)</name>
    <dbReference type="NCBI Taxonomy" id="93061"/>
    <lineage>
        <taxon>Bacteria</taxon>
        <taxon>Bacillati</taxon>
        <taxon>Bacillota</taxon>
        <taxon>Bacilli</taxon>
        <taxon>Bacillales</taxon>
        <taxon>Staphylococcaceae</taxon>
        <taxon>Staphylococcus</taxon>
    </lineage>
</organism>
<name>BIOB_STAA8</name>
<sequence length="335" mass="37559">MNLAKRILQGEQLTKETVLKIYEDTNIDTLDLLNEAYILRKHYFGKKVKLNMILNAKSGICPENCGYCGQSRDIKQKQRYALIPEEQIIDGAKVAHDNHIGTYCIVMSGRGPSDKEVDHISNTVRTIKSQHPQLKICACLGLTNDEQAKKLKSAGVDRYNHNINTSENYHDNVVTTHSYKDRTDTIELMKANNISPCSGVICGMGESNQDIVDMAFALKEMDADSIPINFLHPIKGTKFGSMDDLTPMKCLRIVALFRLINPTKEIRIAGGREVNLRSLQPLALKAANSIFVGDYLITGGQPNQLDYDMINDLGFEIDYDTCENKENKNEVSRAN</sequence>
<comment type="function">
    <text evidence="1">Catalyzes the conversion of dethiobiotin (DTB) to biotin by the insertion of a sulfur atom into dethiobiotin via a radical-based mechanism.</text>
</comment>
<comment type="catalytic activity">
    <reaction evidence="1">
        <text>(4R,5S)-dethiobiotin + (sulfur carrier)-SH + 2 reduced [2Fe-2S]-[ferredoxin] + 2 S-adenosyl-L-methionine = (sulfur carrier)-H + biotin + 2 5'-deoxyadenosine + 2 L-methionine + 2 oxidized [2Fe-2S]-[ferredoxin]</text>
        <dbReference type="Rhea" id="RHEA:22060"/>
        <dbReference type="Rhea" id="RHEA-COMP:10000"/>
        <dbReference type="Rhea" id="RHEA-COMP:10001"/>
        <dbReference type="Rhea" id="RHEA-COMP:14737"/>
        <dbReference type="Rhea" id="RHEA-COMP:14739"/>
        <dbReference type="ChEBI" id="CHEBI:17319"/>
        <dbReference type="ChEBI" id="CHEBI:29917"/>
        <dbReference type="ChEBI" id="CHEBI:33737"/>
        <dbReference type="ChEBI" id="CHEBI:33738"/>
        <dbReference type="ChEBI" id="CHEBI:57586"/>
        <dbReference type="ChEBI" id="CHEBI:57844"/>
        <dbReference type="ChEBI" id="CHEBI:59789"/>
        <dbReference type="ChEBI" id="CHEBI:64428"/>
        <dbReference type="ChEBI" id="CHEBI:149473"/>
        <dbReference type="EC" id="2.8.1.6"/>
    </reaction>
</comment>
<comment type="cofactor">
    <cofactor evidence="1">
        <name>[4Fe-4S] cluster</name>
        <dbReference type="ChEBI" id="CHEBI:49883"/>
    </cofactor>
    <text evidence="1">Binds 1 [4Fe-4S] cluster. The cluster is coordinated with 3 cysteines and an exchangeable S-adenosyl-L-methionine.</text>
</comment>
<comment type="cofactor">
    <cofactor evidence="1">
        <name>[2Fe-2S] cluster</name>
        <dbReference type="ChEBI" id="CHEBI:190135"/>
    </cofactor>
    <text evidence="1">Binds 1 [2Fe-2S] cluster. The cluster is coordinated with 3 cysteines and 1 arginine.</text>
</comment>
<comment type="pathway">
    <text evidence="1">Cofactor biosynthesis; biotin biosynthesis; biotin from 7,8-diaminononanoate: step 2/2.</text>
</comment>
<comment type="subunit">
    <text evidence="1">Homodimer.</text>
</comment>
<comment type="similarity">
    <text evidence="1">Belongs to the radical SAM superfamily. Biotin synthase family.</text>
</comment>
<evidence type="ECO:0000255" key="1">
    <source>
        <dbReference type="HAMAP-Rule" id="MF_01694"/>
    </source>
</evidence>
<evidence type="ECO:0000255" key="2">
    <source>
        <dbReference type="PROSITE-ProRule" id="PRU01266"/>
    </source>
</evidence>
<gene>
    <name evidence="1" type="primary">bioB</name>
    <name type="ordered locus">SAOUHSC_02714</name>
</gene>
<protein>
    <recommendedName>
        <fullName evidence="1">Biotin synthase</fullName>
        <ecNumber evidence="1">2.8.1.6</ecNumber>
    </recommendedName>
</protein>
<accession>Q2FVJ7</accession>